<comment type="function">
    <text evidence="2 3 4 7">Adipokine that modulates insulin action by specifically inhibiting its target protease KLK7 in white adipose tissues.</text>
</comment>
<comment type="activity regulation">
    <text evidence="4 7">Inhibition of KLK7 is enhanced by heparin.</text>
</comment>
<comment type="biophysicochemical properties">
    <temperatureDependence>
        <text evidence="4 5">Highly thermostable, with a Tm value of 70 degrees Celsius. Incubation at 60 degrees Celsius for two hours has no apparent effect on KLK7 inhibition activity. Polymerization is observed at 70 degrees Celsius and above.</text>
    </temperatureDependence>
</comment>
<comment type="subunit">
    <text evidence="3">Forms a stable complex with KLK7.</text>
</comment>
<comment type="interaction">
    <interactant intactId="EBI-6152746">
        <id>Q8IW75</id>
    </interactant>
    <interactant intactId="EBI-949174">
        <id>P07942</id>
        <label>LAMB1</label>
    </interactant>
    <organismsDiffer>false</organismsDiffer>
    <experiments>3</experiments>
</comment>
<comment type="subcellular location">
    <subcellularLocation>
        <location evidence="12">Secreted</location>
    </subcellularLocation>
</comment>
<comment type="tissue specificity">
    <text evidence="2">Expressed in visceral adipose tissues.</text>
</comment>
<comment type="domain">
    <text evidence="9 10 11">The reactive center loop (RCL) extends out from the body of the protein and directs binding to the target protease. The protease cleaves the serpin at the reactive site within the RCL, establishing a covalent linkage between the carboxyl group of the serpin reactive site and the serine hydroxyl of the protease. The resulting inactive serpin-protease complex is highly stable.</text>
</comment>
<comment type="PTM">
    <text evidence="7">Glycosylation slightly decreases affinity for heparin, but otherwise has no significant effect on KLK7 inhibitory activity or thermal stability of the protein.</text>
</comment>
<comment type="similarity">
    <text evidence="8">Belongs to the serpin family.</text>
</comment>
<reference key="1">
    <citation type="journal article" date="2005" name="Proc. Natl. Acad. Sci. U.S.A.">
        <title>Visceral adipose tissue-derived serine protease inhibitor: a unique insulin-sensitizing adipocytokine in obesity.</title>
        <authorList>
            <person name="Hida K."/>
            <person name="Wada J."/>
            <person name="Eguchi J."/>
            <person name="Zhang H."/>
            <person name="Baba M."/>
            <person name="Seida A."/>
            <person name="Hashimoto I."/>
            <person name="Okada T."/>
            <person name="Yasuhara A."/>
            <person name="Nakatsuka A."/>
            <person name="Shikata K."/>
            <person name="Hourai S."/>
            <person name="Futami J."/>
            <person name="Watanabe E."/>
            <person name="Matsuki Y."/>
            <person name="Hiramatsu R."/>
            <person name="Akagi S."/>
            <person name="Makino H."/>
            <person name="Kanwar Y.S."/>
        </authorList>
    </citation>
    <scope>NUCLEOTIDE SEQUENCE [MRNA]</scope>
    <scope>FUNCTION</scope>
    <scope>TISSUE SPECIFICITY</scope>
</reference>
<reference key="2">
    <citation type="submission" date="2002-11" db="EMBL/GenBank/DDBJ databases">
        <authorList>
            <person name="Chen S."/>
            <person name="Guo J.H."/>
            <person name="Yu L."/>
        </authorList>
    </citation>
    <scope>NUCLEOTIDE SEQUENCE [LARGE SCALE MRNA]</scope>
    <source>
        <tissue>Heart</tissue>
    </source>
</reference>
<reference key="3">
    <citation type="journal article" date="2004" name="Genome Res.">
        <title>The status, quality, and expansion of the NIH full-length cDNA project: the Mammalian Gene Collection (MGC).</title>
        <authorList>
            <consortium name="The MGC Project Team"/>
        </authorList>
    </citation>
    <scope>NUCLEOTIDE SEQUENCE [LARGE SCALE MRNA]</scope>
    <source>
        <tissue>Skin</tissue>
    </source>
</reference>
<reference key="4">
    <citation type="journal article" date="2017" name="Biochim. Biophys. Acta">
        <title>Glycosylation of human vaspin (SERPINA12) and its impact on serpin activity, heparin binding and thermal stability.</title>
        <authorList>
            <person name="Oertwig K."/>
            <person name="Ulbricht D."/>
            <person name="Hanke S."/>
            <person name="Pippel J."/>
            <person name="Bellmann-Sickert K."/>
            <person name="Straeter N."/>
            <person name="Heiker J.T."/>
        </authorList>
    </citation>
    <scope>FUNCTION</scope>
    <scope>ACTIVITY REGULATION</scope>
    <scope>SUBCELLULAR LOCATION</scope>
    <scope>GLYCOSYLATION AT ASN-221; ASN-233 AND ASN-267</scope>
    <scope>MUTAGENESIS OF ASN-221; ASN-233 AND ASN-267</scope>
</reference>
<reference key="5">
    <citation type="journal article" date="2013" name="Cell. Mol. Life Sci.">
        <title>Vaspin inhibits kallikrein 7 by serpin mechanism.</title>
        <authorList>
            <person name="Heiker J.T."/>
            <person name="Kloting N."/>
            <person name="Kovacs P."/>
            <person name="Kuettner E.B."/>
            <person name="Strater N."/>
            <person name="Schultz S."/>
            <person name="Kern M."/>
            <person name="Stumvoll M."/>
            <person name="Bluher M."/>
            <person name="Beck-Sickinger A.G."/>
        </authorList>
    </citation>
    <scope>X-RAY CRYSTALLOGRAPHY (2.08 ANGSTROMS) OF 22-414</scope>
    <scope>FUNCTION</scope>
    <scope>DOMAIN</scope>
    <scope>MUTAGENESIS OF THR-365 AND ALA-369</scope>
    <scope>SUBUNIT</scope>
</reference>
<reference evidence="13 14" key="6">
    <citation type="journal article" date="2015" name="Biochem. J.">
        <title>A unique serpin P1' glutamate and a conserved beta-sheet C arginine are key residues for activity, protease recognition and stability of serpinA12 (vaspin).</title>
        <authorList>
            <person name="Ulbricht D."/>
            <person name="Pippel J."/>
            <person name="Schultz S."/>
            <person name="Meier R."/>
            <person name="Strater N."/>
            <person name="Heiker J.T."/>
        </authorList>
    </citation>
    <scope>X-RAY CRYSTALLOGRAPHY (2.20 ANGSTROMS) OF 22-414 OF MUTANTS CYS-305; ALA-379 AND CYS-383</scope>
    <scope>FUNCTION</scope>
    <scope>ACTIVITY REGULATION</scope>
    <scope>BIOPHYSICOCHEMICAL PROPERTIES</scope>
    <scope>DOMAIN</scope>
    <scope>MUTAGENESIS OF ARG-302; ASP-305; GLU-379 AND VAL-383</scope>
</reference>
<reference evidence="15" key="7">
    <citation type="journal article" date="2016" name="Biol. Chem.">
        <title>Crystal structure of cleaved vaspin (serpinA12).</title>
        <authorList>
            <person name="Pippel J."/>
            <person name="Kuettner E.B."/>
            <person name="Ulbricht D."/>
            <person name="Daberger J."/>
            <person name="Schultz S."/>
            <person name="Heiker J.T."/>
            <person name="Strater N."/>
        </authorList>
    </citation>
    <scope>X-RAY CRYSTALLOGRAPHY (2.50 ANGSTROMS) OF 22-414</scope>
    <scope>BIOPHYSICOCHEMICAL PROPERTIES</scope>
    <scope>DOMAIN</scope>
    <scope>PROTEOLYTIC CLEAVAGE</scope>
    <scope>MUTAGENESIS OF THR-365 AND ALA-369</scope>
</reference>
<reference key="8">
    <citation type="journal article" date="2016" name="Am. J. Hum. Genet.">
        <title>Mutations in the pH-sensing G-protein-coupled receptor GPR68 cause amelogenesis imperfecta.</title>
        <authorList>
            <person name="Parry D.A."/>
            <person name="Smith C.E."/>
            <person name="El-Sayed W."/>
            <person name="Poulter J.A."/>
            <person name="Shore R.C."/>
            <person name="Logan C.V."/>
            <person name="Mogi C."/>
            <person name="Sato K."/>
            <person name="Okajima F."/>
            <person name="Harada A."/>
            <person name="Zhang H."/>
            <person name="Koruyucu M."/>
            <person name="Seymen F."/>
            <person name="Hu J.C."/>
            <person name="Simmer J.P."/>
            <person name="Ahmed M."/>
            <person name="Jafri H."/>
            <person name="Johnson C.A."/>
            <person name="Inglehearn C.F."/>
            <person name="Mighell A.J."/>
        </authorList>
    </citation>
    <scope>VARIANT GLY-219</scope>
</reference>
<sequence>MNPTLGLAIFLAVLLTVKGLLKPSFSPRNYKALSEVQGWKQRMAAKELARQNMDLGFKLLKKLAFYNPGRNIFLSPLSISTAFSMLCLGAQDSTLDEIKQGFNFRKMPEKDLHEGFHYIIHELTQKTQDLKLSIGNTLFIDQRLQPQRKFLEDAKNFYSAETILTNFQNLEMAQKQINDFISQKTHGKINNLIENIDPGTVMLLANYIFFRARWKHEFDPNVTKEEDFFLEKNSSVKVPMMFRSGIYQVGYDDKLSCTILEIPYQKNITAIFILPDEGKLKHLEKGLQVDTFSRWKTLLSRRVVDVSVPRLHMTGTFDLKKTLSYIGVSKIFEEHGDLTKIAPHRSLKVGEAVHKAELKMDERGTEGAAGTGAQTLPMETPLVVKIDKPYLLLIYSEKIPSVLFLGKIVNPIGK</sequence>
<feature type="signal peptide" evidence="1">
    <location>
        <begin position="1"/>
        <end position="20"/>
    </location>
</feature>
<feature type="chain" id="PRO_0000041976" description="Serpin A12">
    <location>
        <begin position="21"/>
        <end position="414"/>
    </location>
</feature>
<feature type="region of interest" description="Reactive center loop" evidence="5 9 10">
    <location>
        <begin position="364"/>
        <end position="382"/>
    </location>
</feature>
<feature type="site" description="Cleavage" evidence="5">
    <location>
        <begin position="378"/>
        <end position="379"/>
    </location>
</feature>
<feature type="glycosylation site" description="N-linked (GlcNAc...) (complex) asparagine" evidence="7">
    <location>
        <position position="221"/>
    </location>
</feature>
<feature type="glycosylation site" description="N-linked (GlcNAc...) (complex) asparagine" evidence="7">
    <location>
        <position position="233"/>
    </location>
</feature>
<feature type="glycosylation site" description="N-linked (GlcNAc...) (high mannose) asparagine" evidence="7">
    <location>
        <position position="267"/>
    </location>
</feature>
<feature type="sequence variant" id="VAR_051943" description="In dbSNP:rs17090972.">
    <original>Q</original>
    <variation>K</variation>
    <location>
        <position position="142"/>
    </location>
</feature>
<feature type="sequence variant" id="VAR_077875" description="In dbSNP:rs192558870." evidence="6">
    <original>D</original>
    <variation>G</variation>
    <location>
        <position position="219"/>
    </location>
</feature>
<feature type="sequence variant" id="VAR_051944" description="In dbSNP:rs34519784.">
    <original>I</original>
    <variation>V</variation>
    <location>
        <position position="394"/>
    </location>
</feature>
<feature type="mutagenesis site" description="Reduced N-glycosylation. Loss of N-glycosylation; when associated with A-233 and A-267." evidence="7">
    <original>N</original>
    <variation>A</variation>
    <location>
        <position position="221"/>
    </location>
</feature>
<feature type="mutagenesis site" description="Reduced N-glycosylation. Loss of N-glycosylation; when associated with A-221 and A-267." evidence="7">
    <original>N</original>
    <variation>A</variation>
    <location>
        <position position="233"/>
    </location>
</feature>
<feature type="mutagenesis site" description="Reduced N-glycosylation. Loss of N-glycosylation; when associated with A-221 and A-233." evidence="7">
    <original>N</original>
    <variation>A</variation>
    <location>
        <position position="267"/>
    </location>
</feature>
<feature type="mutagenesis site" description="Significantly impairs KLK7 inhibition activity. Slightly enhances KLK7 inhibition activity; when associated with S-379." evidence="4">
    <original>R</original>
    <variation>A</variation>
    <variation>E</variation>
    <location>
        <position position="302"/>
    </location>
</feature>
<feature type="mutagenesis site" description="Results in formation of an artificial disulfide bond which stabilizes the reactive center loop and enhances KLK7 inhibition activity; when associated with C-383." evidence="4">
    <original>D</original>
    <variation>C</variation>
    <location>
        <position position="305"/>
    </location>
</feature>
<feature type="mutagenesis site" description="Fails to inhibit KLK7 activity. Increased protein stability in cleaved form and conformational changes which may allow escape of the substrate." evidence="3 5">
    <original>T</original>
    <variation>R</variation>
    <location>
        <position position="365"/>
    </location>
</feature>
<feature type="mutagenesis site" description="Fails to inhibit KLK7 activity. Increased protein stability in cleaved form and conformational changes which may allow escape of the substrate." evidence="3 5">
    <original>A</original>
    <variation>P</variation>
    <location>
        <position position="369"/>
    </location>
</feature>
<feature type="mutagenesis site" description="Significantly enhances KLK7 inhibition activity. Slightly enhances KLK7 inhibition activity; when associated with E-302." evidence="4">
    <original>E</original>
    <variation>S</variation>
    <location>
        <position position="379"/>
    </location>
</feature>
<feature type="mutagenesis site" description="Results in formation of an artificial disulfide bond which stabilizes the reactive center loop and enhances KLK7 inhibition activity; when associated with C-305." evidence="4">
    <original>V</original>
    <variation>C</variation>
    <location>
        <position position="383"/>
    </location>
</feature>
<feature type="helix" evidence="16">
    <location>
        <begin position="39"/>
        <end position="66"/>
    </location>
</feature>
<feature type="strand" evidence="16">
    <location>
        <begin position="72"/>
        <end position="74"/>
    </location>
</feature>
<feature type="helix" evidence="16">
    <location>
        <begin position="76"/>
        <end position="86"/>
    </location>
</feature>
<feature type="turn" evidence="16">
    <location>
        <begin position="87"/>
        <end position="89"/>
    </location>
</feature>
<feature type="helix" evidence="16">
    <location>
        <begin position="92"/>
        <end position="101"/>
    </location>
</feature>
<feature type="strand" evidence="17">
    <location>
        <begin position="105"/>
        <end position="107"/>
    </location>
</feature>
<feature type="helix" evidence="16">
    <location>
        <begin position="109"/>
        <end position="123"/>
    </location>
</feature>
<feature type="strand" evidence="16">
    <location>
        <begin position="125"/>
        <end position="141"/>
    </location>
</feature>
<feature type="helix" evidence="16">
    <location>
        <begin position="148"/>
        <end position="158"/>
    </location>
</feature>
<feature type="strand" evidence="16">
    <location>
        <begin position="161"/>
        <end position="165"/>
    </location>
</feature>
<feature type="helix" evidence="16">
    <location>
        <begin position="170"/>
        <end position="184"/>
    </location>
</feature>
<feature type="turn" evidence="16">
    <location>
        <begin position="185"/>
        <end position="187"/>
    </location>
</feature>
<feature type="strand" evidence="16">
    <location>
        <begin position="202"/>
        <end position="212"/>
    </location>
</feature>
<feature type="strand" evidence="16">
    <location>
        <begin position="214"/>
        <end position="216"/>
    </location>
</feature>
<feature type="helix" evidence="16">
    <location>
        <begin position="220"/>
        <end position="222"/>
    </location>
</feature>
<feature type="strand" evidence="16">
    <location>
        <begin position="224"/>
        <end position="233"/>
    </location>
</feature>
<feature type="strand" evidence="16">
    <location>
        <begin position="235"/>
        <end position="252"/>
    </location>
</feature>
<feature type="turn" evidence="16">
    <location>
        <begin position="253"/>
        <end position="256"/>
    </location>
</feature>
<feature type="strand" evidence="16">
    <location>
        <begin position="257"/>
        <end position="275"/>
    </location>
</feature>
<feature type="helix" evidence="16">
    <location>
        <begin position="280"/>
        <end position="286"/>
    </location>
</feature>
<feature type="helix" evidence="16">
    <location>
        <begin position="289"/>
        <end position="297"/>
    </location>
</feature>
<feature type="strand" evidence="16">
    <location>
        <begin position="300"/>
        <end position="309"/>
    </location>
</feature>
<feature type="strand" evidence="16">
    <location>
        <begin position="311"/>
        <end position="318"/>
    </location>
</feature>
<feature type="helix" evidence="16">
    <location>
        <begin position="319"/>
        <end position="322"/>
    </location>
</feature>
<feature type="helix" evidence="16">
    <location>
        <begin position="323"/>
        <end position="326"/>
    </location>
</feature>
<feature type="helix" evidence="16">
    <location>
        <begin position="330"/>
        <end position="332"/>
    </location>
</feature>
<feature type="turn" evidence="16">
    <location>
        <begin position="339"/>
        <end position="341"/>
    </location>
</feature>
<feature type="strand" evidence="16">
    <location>
        <begin position="351"/>
        <end position="360"/>
    </location>
</feature>
<feature type="strand" evidence="17">
    <location>
        <begin position="362"/>
        <end position="376"/>
    </location>
</feature>
<feature type="strand" evidence="16">
    <location>
        <begin position="382"/>
        <end position="385"/>
    </location>
</feature>
<feature type="strand" evidence="16">
    <location>
        <begin position="390"/>
        <end position="396"/>
    </location>
</feature>
<feature type="turn" evidence="16">
    <location>
        <begin position="397"/>
        <end position="400"/>
    </location>
</feature>
<feature type="strand" evidence="16">
    <location>
        <begin position="401"/>
        <end position="409"/>
    </location>
</feature>
<evidence type="ECO:0000250" key="1"/>
<evidence type="ECO:0000269" key="2">
    <source>
    </source>
</evidence>
<evidence type="ECO:0000269" key="3">
    <source>
    </source>
</evidence>
<evidence type="ECO:0000269" key="4">
    <source>
    </source>
</evidence>
<evidence type="ECO:0000269" key="5">
    <source>
    </source>
</evidence>
<evidence type="ECO:0000269" key="6">
    <source>
    </source>
</evidence>
<evidence type="ECO:0000269" key="7">
    <source>
    </source>
</evidence>
<evidence type="ECO:0000305" key="8"/>
<evidence type="ECO:0000305" key="9">
    <source>
    </source>
</evidence>
<evidence type="ECO:0000305" key="10">
    <source>
    </source>
</evidence>
<evidence type="ECO:0000305" key="11">
    <source>
    </source>
</evidence>
<evidence type="ECO:0000305" key="12">
    <source>
    </source>
</evidence>
<evidence type="ECO:0007744" key="13">
    <source>
        <dbReference type="PDB" id="4Y3K"/>
    </source>
</evidence>
<evidence type="ECO:0007744" key="14">
    <source>
        <dbReference type="PDB" id="4Y40"/>
    </source>
</evidence>
<evidence type="ECO:0007744" key="15">
    <source>
        <dbReference type="PDB" id="5EI0"/>
    </source>
</evidence>
<evidence type="ECO:0007829" key="16">
    <source>
        <dbReference type="PDB" id="4IF8"/>
    </source>
</evidence>
<evidence type="ECO:0007829" key="17">
    <source>
        <dbReference type="PDB" id="5EI0"/>
    </source>
</evidence>
<protein>
    <recommendedName>
        <fullName>Serpin A12</fullName>
    </recommendedName>
    <alternativeName>
        <fullName>OL-64</fullName>
    </alternativeName>
    <alternativeName>
        <fullName>Visceral adipose tissue-derived serine protease inhibitor</fullName>
        <shortName>Vaspin</shortName>
    </alternativeName>
    <alternativeName>
        <fullName>Visceral adipose-specific serpin</fullName>
    </alternativeName>
</protein>
<gene>
    <name type="primary">SERPINA12</name>
</gene>
<organism>
    <name type="scientific">Homo sapiens</name>
    <name type="common">Human</name>
    <dbReference type="NCBI Taxonomy" id="9606"/>
    <lineage>
        <taxon>Eukaryota</taxon>
        <taxon>Metazoa</taxon>
        <taxon>Chordata</taxon>
        <taxon>Craniata</taxon>
        <taxon>Vertebrata</taxon>
        <taxon>Euteleostomi</taxon>
        <taxon>Mammalia</taxon>
        <taxon>Eutheria</taxon>
        <taxon>Euarchontoglires</taxon>
        <taxon>Primates</taxon>
        <taxon>Haplorrhini</taxon>
        <taxon>Catarrhini</taxon>
        <taxon>Hominidae</taxon>
        <taxon>Homo</taxon>
    </lineage>
</organism>
<name>SPA12_HUMAN</name>
<accession>Q8IW75</accession>
<keyword id="KW-0002">3D-structure</keyword>
<keyword id="KW-0325">Glycoprotein</keyword>
<keyword id="KW-0646">Protease inhibitor</keyword>
<keyword id="KW-1267">Proteomics identification</keyword>
<keyword id="KW-1185">Reference proteome</keyword>
<keyword id="KW-0964">Secreted</keyword>
<keyword id="KW-0722">Serine protease inhibitor</keyword>
<keyword id="KW-0732">Signal</keyword>
<dbReference type="EMBL" id="AY326420">
    <property type="protein sequence ID" value="AAP88384.1"/>
    <property type="molecule type" value="mRNA"/>
</dbReference>
<dbReference type="EMBL" id="AY177692">
    <property type="protein sequence ID" value="AAO18649.1"/>
    <property type="molecule type" value="mRNA"/>
</dbReference>
<dbReference type="EMBL" id="BC040857">
    <property type="protein sequence ID" value="AAH40857.1"/>
    <property type="molecule type" value="mRNA"/>
</dbReference>
<dbReference type="CCDS" id="CCDS9926.1"/>
<dbReference type="RefSeq" id="NP_001291390.1">
    <property type="nucleotide sequence ID" value="NM_001304461.2"/>
</dbReference>
<dbReference type="RefSeq" id="NP_001369196.1">
    <property type="nucleotide sequence ID" value="NM_001382267.1"/>
</dbReference>
<dbReference type="RefSeq" id="NP_776249.1">
    <property type="nucleotide sequence ID" value="NM_173850.4"/>
</dbReference>
<dbReference type="RefSeq" id="XP_011534753.1">
    <property type="nucleotide sequence ID" value="XM_011536451.2"/>
</dbReference>
<dbReference type="RefSeq" id="XP_011534754.1">
    <property type="nucleotide sequence ID" value="XM_011536452.2"/>
</dbReference>
<dbReference type="RefSeq" id="XP_011534755.1">
    <property type="nucleotide sequence ID" value="XM_011536453.2"/>
</dbReference>
<dbReference type="RefSeq" id="XP_011534756.1">
    <property type="nucleotide sequence ID" value="XM_011536454.2"/>
</dbReference>
<dbReference type="RefSeq" id="XP_016876478.1">
    <property type="nucleotide sequence ID" value="XM_017020989.1"/>
</dbReference>
<dbReference type="RefSeq" id="XP_016876479.1">
    <property type="nucleotide sequence ID" value="XM_017020990.1"/>
</dbReference>
<dbReference type="PDB" id="4IF8">
    <property type="method" value="X-ray"/>
    <property type="resolution" value="2.08 A"/>
    <property type="chains" value="A/B=22-414"/>
</dbReference>
<dbReference type="PDB" id="4Y3K">
    <property type="method" value="X-ray"/>
    <property type="resolution" value="2.20 A"/>
    <property type="chains" value="A/B=22-414"/>
</dbReference>
<dbReference type="PDB" id="4Y40">
    <property type="method" value="X-ray"/>
    <property type="resolution" value="2.20 A"/>
    <property type="chains" value="A/B=22-414"/>
</dbReference>
<dbReference type="PDB" id="5EI0">
    <property type="method" value="X-ray"/>
    <property type="resolution" value="2.50 A"/>
    <property type="chains" value="A/E=22-414"/>
</dbReference>
<dbReference type="PDBsum" id="4IF8"/>
<dbReference type="PDBsum" id="4Y3K"/>
<dbReference type="PDBsum" id="4Y40"/>
<dbReference type="PDBsum" id="5EI0"/>
<dbReference type="SMR" id="Q8IW75"/>
<dbReference type="BioGRID" id="126901">
    <property type="interactions" value="147"/>
</dbReference>
<dbReference type="FunCoup" id="Q8IW75">
    <property type="interactions" value="287"/>
</dbReference>
<dbReference type="IntAct" id="Q8IW75">
    <property type="interactions" value="92"/>
</dbReference>
<dbReference type="STRING" id="9606.ENSP00000342109"/>
<dbReference type="MEROPS" id="I04.091"/>
<dbReference type="GlyCosmos" id="Q8IW75">
    <property type="glycosylation" value="3 sites, No reported glycans"/>
</dbReference>
<dbReference type="GlyGen" id="Q8IW75">
    <property type="glycosylation" value="4 sites, 1 O-linked glycan (1 site)"/>
</dbReference>
<dbReference type="iPTMnet" id="Q8IW75"/>
<dbReference type="PhosphoSitePlus" id="Q8IW75"/>
<dbReference type="BioMuta" id="SERPINA12"/>
<dbReference type="DMDM" id="74728144"/>
<dbReference type="MassIVE" id="Q8IW75"/>
<dbReference type="PaxDb" id="9606-ENSP00000342109"/>
<dbReference type="PeptideAtlas" id="Q8IW75"/>
<dbReference type="ProteomicsDB" id="70821"/>
<dbReference type="Pumba" id="Q8IW75"/>
<dbReference type="TopDownProteomics" id="Q8IW75"/>
<dbReference type="Antibodypedia" id="27079">
    <property type="antibodies" value="373 antibodies from 32 providers"/>
</dbReference>
<dbReference type="DNASU" id="145264"/>
<dbReference type="Ensembl" id="ENST00000341228.2">
    <property type="protein sequence ID" value="ENSP00000342109.2"/>
    <property type="gene ID" value="ENSG00000165953.10"/>
</dbReference>
<dbReference type="Ensembl" id="ENST00000556881.5">
    <property type="protein sequence ID" value="ENSP00000451738.1"/>
    <property type="gene ID" value="ENSG00000165953.10"/>
</dbReference>
<dbReference type="Ensembl" id="ENST00000677451.1">
    <property type="protein sequence ID" value="ENSP00000503935.1"/>
    <property type="gene ID" value="ENSG00000165953.10"/>
</dbReference>
<dbReference type="GeneID" id="145264"/>
<dbReference type="KEGG" id="hsa:145264"/>
<dbReference type="MANE-Select" id="ENST00000677451.1">
    <property type="protein sequence ID" value="ENSP00000503935.1"/>
    <property type="RefSeq nucleotide sequence ID" value="NM_001382267.1"/>
    <property type="RefSeq protein sequence ID" value="NP_001369196.1"/>
</dbReference>
<dbReference type="UCSC" id="uc001ydj.3">
    <property type="organism name" value="human"/>
</dbReference>
<dbReference type="AGR" id="HGNC:18359"/>
<dbReference type="CTD" id="145264"/>
<dbReference type="DisGeNET" id="145264"/>
<dbReference type="GeneCards" id="SERPINA12"/>
<dbReference type="HGNC" id="HGNC:18359">
    <property type="gene designation" value="SERPINA12"/>
</dbReference>
<dbReference type="HPA" id="ENSG00000165953">
    <property type="expression patterns" value="Tissue enriched (skin)"/>
</dbReference>
<dbReference type="MalaCards" id="SERPINA12"/>
<dbReference type="MIM" id="617471">
    <property type="type" value="gene"/>
</dbReference>
<dbReference type="neXtProt" id="NX_Q8IW75"/>
<dbReference type="OpenTargets" id="ENSG00000165953"/>
<dbReference type="PharmGKB" id="PA134863157"/>
<dbReference type="VEuPathDB" id="HostDB:ENSG00000165953"/>
<dbReference type="eggNOG" id="KOG2392">
    <property type="taxonomic scope" value="Eukaryota"/>
</dbReference>
<dbReference type="GeneTree" id="ENSGT00940000161977"/>
<dbReference type="HOGENOM" id="CLU_023330_2_1_1"/>
<dbReference type="InParanoid" id="Q8IW75"/>
<dbReference type="OMA" id="MFRGGMY"/>
<dbReference type="OrthoDB" id="671595at2759"/>
<dbReference type="PAN-GO" id="Q8IW75">
    <property type="GO annotations" value="3 GO annotations based on evolutionary models"/>
</dbReference>
<dbReference type="PhylomeDB" id="Q8IW75"/>
<dbReference type="TreeFam" id="TF343201"/>
<dbReference type="PathwayCommons" id="Q8IW75"/>
<dbReference type="SignaLink" id="Q8IW75"/>
<dbReference type="BioGRID-ORCS" id="145264">
    <property type="hits" value="11 hits in 1144 CRISPR screens"/>
</dbReference>
<dbReference type="ChiTaRS" id="SERPINA12">
    <property type="organism name" value="human"/>
</dbReference>
<dbReference type="EvolutionaryTrace" id="Q8IW75"/>
<dbReference type="GenomeRNAi" id="145264"/>
<dbReference type="Pharos" id="Q8IW75">
    <property type="development level" value="Tbio"/>
</dbReference>
<dbReference type="PRO" id="PR:Q8IW75"/>
<dbReference type="Proteomes" id="UP000005640">
    <property type="component" value="Chromosome 14"/>
</dbReference>
<dbReference type="RNAct" id="Q8IW75">
    <property type="molecule type" value="protein"/>
</dbReference>
<dbReference type="Bgee" id="ENSG00000165953">
    <property type="expression patterns" value="Expressed in skin of leg and 81 other cell types or tissues"/>
</dbReference>
<dbReference type="GO" id="GO:0005615">
    <property type="term" value="C:extracellular space"/>
    <property type="evidence" value="ECO:0000318"/>
    <property type="project" value="GO_Central"/>
</dbReference>
<dbReference type="GO" id="GO:0005886">
    <property type="term" value="C:plasma membrane"/>
    <property type="evidence" value="ECO:0007669"/>
    <property type="project" value="Ensembl"/>
</dbReference>
<dbReference type="GO" id="GO:0140678">
    <property type="term" value="F:molecular function inhibitor activity"/>
    <property type="evidence" value="ECO:0000315"/>
    <property type="project" value="DisProt"/>
</dbReference>
<dbReference type="GO" id="GO:0004867">
    <property type="term" value="F:serine-type endopeptidase inhibitor activity"/>
    <property type="evidence" value="ECO:0000318"/>
    <property type="project" value="GO_Central"/>
</dbReference>
<dbReference type="GO" id="GO:0006094">
    <property type="term" value="P:gluconeogenesis"/>
    <property type="evidence" value="ECO:0007669"/>
    <property type="project" value="Ensembl"/>
</dbReference>
<dbReference type="GO" id="GO:0008610">
    <property type="term" value="P:lipid biosynthetic process"/>
    <property type="evidence" value="ECO:0007669"/>
    <property type="project" value="Ensembl"/>
</dbReference>
<dbReference type="GO" id="GO:0045721">
    <property type="term" value="P:negative regulation of gluconeogenesis"/>
    <property type="evidence" value="ECO:0007669"/>
    <property type="project" value="Ensembl"/>
</dbReference>
<dbReference type="GO" id="GO:0051055">
    <property type="term" value="P:negative regulation of lipid biosynthetic process"/>
    <property type="evidence" value="ECO:0007669"/>
    <property type="project" value="Ensembl"/>
</dbReference>
<dbReference type="GO" id="GO:0043491">
    <property type="term" value="P:phosphatidylinositol 3-kinase/protein kinase B signal transduction"/>
    <property type="evidence" value="ECO:0007669"/>
    <property type="project" value="Ensembl"/>
</dbReference>
<dbReference type="GO" id="GO:0046628">
    <property type="term" value="P:positive regulation of insulin receptor signaling pathway"/>
    <property type="evidence" value="ECO:0007669"/>
    <property type="project" value="Ensembl"/>
</dbReference>
<dbReference type="GO" id="GO:0051897">
    <property type="term" value="P:positive regulation of phosphatidylinositol 3-kinase/protein kinase B signal transduction"/>
    <property type="evidence" value="ECO:0007669"/>
    <property type="project" value="Ensembl"/>
</dbReference>
<dbReference type="GO" id="GO:0090181">
    <property type="term" value="P:regulation of cholesterol metabolic process"/>
    <property type="evidence" value="ECO:0007669"/>
    <property type="project" value="Ensembl"/>
</dbReference>
<dbReference type="GO" id="GO:0090207">
    <property type="term" value="P:regulation of triglyceride metabolic process"/>
    <property type="evidence" value="ECO:0007669"/>
    <property type="project" value="Ensembl"/>
</dbReference>
<dbReference type="CDD" id="cd19558">
    <property type="entry name" value="serpinA12_vaspin"/>
    <property type="match status" value="1"/>
</dbReference>
<dbReference type="FunFam" id="3.30.497.10:FF:000001">
    <property type="entry name" value="Serine protease inhibitor"/>
    <property type="match status" value="1"/>
</dbReference>
<dbReference type="FunFam" id="2.30.39.10:FF:000002">
    <property type="entry name" value="Serpin family D member 1"/>
    <property type="match status" value="1"/>
</dbReference>
<dbReference type="Gene3D" id="2.30.39.10">
    <property type="entry name" value="Alpha-1-antitrypsin, domain 1"/>
    <property type="match status" value="1"/>
</dbReference>
<dbReference type="Gene3D" id="3.30.497.10">
    <property type="entry name" value="Antithrombin, subunit I, domain 2"/>
    <property type="match status" value="1"/>
</dbReference>
<dbReference type="InterPro" id="IPR023796">
    <property type="entry name" value="Serpin_dom"/>
</dbReference>
<dbReference type="InterPro" id="IPR000215">
    <property type="entry name" value="Serpin_fam"/>
</dbReference>
<dbReference type="InterPro" id="IPR036186">
    <property type="entry name" value="Serpin_sf"/>
</dbReference>
<dbReference type="InterPro" id="IPR042178">
    <property type="entry name" value="Serpin_sf_1"/>
</dbReference>
<dbReference type="InterPro" id="IPR042185">
    <property type="entry name" value="Serpin_sf_2"/>
</dbReference>
<dbReference type="PANTHER" id="PTHR11461">
    <property type="entry name" value="SERINE PROTEASE INHIBITOR, SERPIN"/>
    <property type="match status" value="1"/>
</dbReference>
<dbReference type="PANTHER" id="PTHR11461:SF157">
    <property type="entry name" value="SERPIN A12"/>
    <property type="match status" value="1"/>
</dbReference>
<dbReference type="Pfam" id="PF00079">
    <property type="entry name" value="Serpin"/>
    <property type="match status" value="1"/>
</dbReference>
<dbReference type="SMART" id="SM00093">
    <property type="entry name" value="SERPIN"/>
    <property type="match status" value="1"/>
</dbReference>
<dbReference type="SUPFAM" id="SSF56574">
    <property type="entry name" value="Serpins"/>
    <property type="match status" value="1"/>
</dbReference>
<proteinExistence type="evidence at protein level"/>